<comment type="function">
    <text>This enzyme recycles the H(2) produced by nitrogenase to increase the production of ATP and to protect nitrogenase against inhibition or damage by O(2) under carbon- or phosphate-limited conditions.</text>
</comment>
<comment type="catalytic activity">
    <reaction>
        <text>H2 + A = AH2</text>
        <dbReference type="Rhea" id="RHEA:12116"/>
        <dbReference type="ChEBI" id="CHEBI:13193"/>
        <dbReference type="ChEBI" id="CHEBI:17499"/>
        <dbReference type="ChEBI" id="CHEBI:18276"/>
        <dbReference type="EC" id="1.12.99.6"/>
    </reaction>
</comment>
<comment type="cofactor">
    <cofactor evidence="1">
        <name>Ni(2+)</name>
        <dbReference type="ChEBI" id="CHEBI:49786"/>
    </cofactor>
    <text evidence="1">Binds 1 nickel ion per subunit.</text>
</comment>
<comment type="subunit">
    <text>Heterodimer of a large and a small subunit.</text>
</comment>
<comment type="interaction">
    <interactant intactId="EBI-15948409">
        <id>P31891</id>
    </interactant>
    <interactant intactId="EBI-15948434">
        <id>P31892</id>
        <label>hoxK</label>
    </interactant>
    <organismsDiffer>false</organismsDiffer>
    <experiments>3</experiments>
</comment>
<comment type="subcellular location">
    <subcellularLocation>
        <location>Cell membrane</location>
        <topology>Peripheral membrane protein</topology>
    </subcellularLocation>
</comment>
<comment type="similarity">
    <text evidence="4">Belongs to the [NiFe]/[NiFeSe] hydrogenase large subunit family.</text>
</comment>
<name>MBHL_CUPNH</name>
<accession>P31891</accession>
<accession>Q7WXU5</accession>
<protein>
    <recommendedName>
        <fullName>Uptake hydrogenase large subunit</fullName>
        <ecNumber>1.12.99.6</ecNumber>
    </recommendedName>
    <alternativeName>
        <fullName>Hydrogenlyase</fullName>
    </alternativeName>
    <alternativeName>
        <fullName>Membrane-bound hydrogenase large subunit</fullName>
    </alternativeName>
</protein>
<evidence type="ECO:0000250" key="1"/>
<evidence type="ECO:0000255" key="2"/>
<evidence type="ECO:0000269" key="3">
    <source>
    </source>
</evidence>
<evidence type="ECO:0000305" key="4"/>
<evidence type="ECO:0007829" key="5">
    <source>
        <dbReference type="PDB" id="3RGW"/>
    </source>
</evidence>
<evidence type="ECO:0007829" key="6">
    <source>
        <dbReference type="PDB" id="5MDL"/>
    </source>
</evidence>
<evidence type="ECO:0007829" key="7">
    <source>
        <dbReference type="PDB" id="7ODH"/>
    </source>
</evidence>
<proteinExistence type="evidence at protein level"/>
<reference key="1">
    <citation type="journal article" date="1992" name="J. Bacteriol.">
        <title>A gene complex coding for the membrane-bound hydrogenase of Alcaligenes eutrophus H16.</title>
        <authorList>
            <person name="Kortlueke C."/>
            <person name="Horstmann K."/>
            <person name="Schwartz E."/>
            <person name="Rohde M."/>
            <person name="Binsack R."/>
            <person name="Friedrich B."/>
        </authorList>
    </citation>
    <scope>NUCLEOTIDE SEQUENCE [GENOMIC DNA]</scope>
</reference>
<reference key="2">
    <citation type="journal article" date="2003" name="J. Mol. Biol.">
        <title>Complete nucleotide sequence of pHG1: a Ralstonia eutropha H16 megaplasmid encoding key enzymes of H(2)-based lithoautotrophy and anaerobiosis.</title>
        <authorList>
            <person name="Schwartz E."/>
            <person name="Henne A."/>
            <person name="Cramm R."/>
            <person name="Eitinger T."/>
            <person name="Friedrich B."/>
            <person name="Gottschalk G."/>
        </authorList>
    </citation>
    <scope>NUCLEOTIDE SEQUENCE [LARGE SCALE GENOMIC DNA]</scope>
    <source>
        <strain>ATCC 17699 / DSM 428 / KCTC 22496 / NCIMB 10442 / H16 / Stanier 337</strain>
    </source>
</reference>
<reference key="3">
    <citation type="journal article" date="1989" name="Biochim. Biophys. Acta">
        <title>Immunological comparison of subunits isolated from various hydrogenases of aerobic hydrogen bacteria.</title>
        <authorList>
            <person name="Lorenz B."/>
            <person name="Schneider K."/>
            <person name="Kratzin H."/>
            <person name="Schlegel H.G."/>
        </authorList>
    </citation>
    <scope>PROTEIN SEQUENCE OF 2-31</scope>
</reference>
<feature type="initiator methionine" description="Removed" evidence="3">
    <location>
        <position position="1"/>
    </location>
</feature>
<feature type="chain" id="PRO_0000199706" description="Uptake hydrogenase large subunit">
    <location>
        <begin position="2"/>
        <end position="618"/>
    </location>
</feature>
<feature type="binding site" evidence="2">
    <location>
        <position position="75"/>
    </location>
    <ligand>
        <name>Ni(2+)</name>
        <dbReference type="ChEBI" id="CHEBI:49786"/>
    </ligand>
</feature>
<feature type="binding site" evidence="2">
    <location>
        <position position="78"/>
    </location>
    <ligand>
        <name>Ni(2+)</name>
        <dbReference type="ChEBI" id="CHEBI:49786"/>
    </ligand>
</feature>
<feature type="binding site" evidence="2">
    <location>
        <position position="597"/>
    </location>
    <ligand>
        <name>Ni(2+)</name>
        <dbReference type="ChEBI" id="CHEBI:49786"/>
    </ligand>
</feature>
<feature type="binding site" evidence="2">
    <location>
        <position position="600"/>
    </location>
    <ligand>
        <name>Ni(2+)</name>
        <dbReference type="ChEBI" id="CHEBI:49786"/>
    </ligand>
</feature>
<feature type="sequence conflict" description="In Ref. 1; AAA16462." evidence="4" ref="1">
    <original>M</original>
    <variation>V</variation>
    <location>
        <position position="578"/>
    </location>
</feature>
<feature type="strand" evidence="7">
    <location>
        <begin position="4"/>
        <end position="6"/>
    </location>
</feature>
<feature type="strand" evidence="7">
    <location>
        <begin position="9"/>
        <end position="11"/>
    </location>
</feature>
<feature type="strand" evidence="7">
    <location>
        <begin position="14"/>
        <end position="20"/>
    </location>
</feature>
<feature type="strand" evidence="7">
    <location>
        <begin position="25"/>
        <end position="28"/>
    </location>
</feature>
<feature type="strand" evidence="7">
    <location>
        <begin position="30"/>
        <end position="36"/>
    </location>
</feature>
<feature type="strand" evidence="7">
    <location>
        <begin position="40"/>
        <end position="49"/>
    </location>
</feature>
<feature type="helix" evidence="7">
    <location>
        <begin position="55"/>
        <end position="58"/>
    </location>
</feature>
<feature type="turn" evidence="7">
    <location>
        <begin position="59"/>
        <end position="61"/>
    </location>
</feature>
<feature type="helix" evidence="7">
    <location>
        <begin position="64"/>
        <end position="66"/>
    </location>
</feature>
<feature type="helix" evidence="7">
    <location>
        <begin position="67"/>
        <end position="72"/>
    </location>
</feature>
<feature type="strand" evidence="7">
    <location>
        <begin position="76"/>
        <end position="78"/>
    </location>
</feature>
<feature type="helix" evidence="7">
    <location>
        <begin position="81"/>
        <end position="94"/>
    </location>
</feature>
<feature type="helix" evidence="7">
    <location>
        <begin position="100"/>
        <end position="124"/>
    </location>
</feature>
<feature type="helix" evidence="7">
    <location>
        <begin position="127"/>
        <end position="129"/>
    </location>
</feature>
<feature type="helix" evidence="7">
    <location>
        <begin position="133"/>
        <end position="136"/>
    </location>
</feature>
<feature type="helix" evidence="7">
    <location>
        <begin position="141"/>
        <end position="151"/>
    </location>
</feature>
<feature type="helix" evidence="7">
    <location>
        <begin position="160"/>
        <end position="175"/>
    </location>
</feature>
<feature type="helix" evidence="7">
    <location>
        <begin position="180"/>
        <end position="182"/>
    </location>
</feature>
<feature type="helix" evidence="7">
    <location>
        <begin position="196"/>
        <end position="216"/>
    </location>
</feature>
<feature type="helix" evidence="7">
    <location>
        <begin position="218"/>
        <end position="224"/>
    </location>
</feature>
<feature type="strand" evidence="7">
    <location>
        <begin position="225"/>
        <end position="229"/>
    </location>
</feature>
<feature type="helix" evidence="5">
    <location>
        <begin position="245"/>
        <end position="247"/>
    </location>
</feature>
<feature type="turn" evidence="6">
    <location>
        <begin position="248"/>
        <end position="250"/>
    </location>
</feature>
<feature type="strand" evidence="7">
    <location>
        <begin position="251"/>
        <end position="253"/>
    </location>
</feature>
<feature type="helix" evidence="7">
    <location>
        <begin position="255"/>
        <end position="274"/>
    </location>
</feature>
<feature type="helix" evidence="7">
    <location>
        <begin position="276"/>
        <end position="289"/>
    </location>
</feature>
<feature type="helix" evidence="7">
    <location>
        <begin position="297"/>
        <end position="300"/>
    </location>
</feature>
<feature type="strand" evidence="7">
    <location>
        <begin position="303"/>
        <end position="305"/>
    </location>
</feature>
<feature type="strand" evidence="7">
    <location>
        <begin position="308"/>
        <end position="312"/>
    </location>
</feature>
<feature type="helix" evidence="7">
    <location>
        <begin position="316"/>
        <end position="318"/>
    </location>
</feature>
<feature type="strand" evidence="7">
    <location>
        <begin position="319"/>
        <end position="321"/>
    </location>
</feature>
<feature type="strand" evidence="7">
    <location>
        <begin position="324"/>
        <end position="326"/>
    </location>
</feature>
<feature type="turn" evidence="7">
    <location>
        <begin position="342"/>
        <end position="344"/>
    </location>
</feature>
<feature type="strand" evidence="7">
    <location>
        <begin position="345"/>
        <end position="348"/>
    </location>
</feature>
<feature type="strand" evidence="7">
    <location>
        <begin position="352"/>
        <end position="354"/>
    </location>
</feature>
<feature type="helix" evidence="7">
    <location>
        <begin position="365"/>
        <end position="367"/>
    </location>
</feature>
<feature type="strand" evidence="7">
    <location>
        <begin position="381"/>
        <end position="383"/>
    </location>
</feature>
<feature type="strand" evidence="7">
    <location>
        <begin position="386"/>
        <end position="389"/>
    </location>
</feature>
<feature type="strand" evidence="7">
    <location>
        <begin position="401"/>
        <end position="404"/>
    </location>
</feature>
<feature type="helix" evidence="7">
    <location>
        <begin position="413"/>
        <end position="425"/>
    </location>
</feature>
<feature type="helix" evidence="7">
    <location>
        <begin position="429"/>
        <end position="431"/>
    </location>
</feature>
<feature type="helix" evidence="7">
    <location>
        <begin position="432"/>
        <end position="446"/>
    </location>
</feature>
<feature type="helix" evidence="7">
    <location>
        <begin position="448"/>
        <end position="453"/>
    </location>
</feature>
<feature type="helix" evidence="7">
    <location>
        <begin position="462"/>
        <end position="465"/>
    </location>
</feature>
<feature type="strand" evidence="7">
    <location>
        <begin position="466"/>
        <end position="468"/>
    </location>
</feature>
<feature type="helix" evidence="7">
    <location>
        <begin position="469"/>
        <end position="499"/>
    </location>
</feature>
<feature type="helix" evidence="7">
    <location>
        <begin position="513"/>
        <end position="515"/>
    </location>
</feature>
<feature type="strand" evidence="7">
    <location>
        <begin position="518"/>
        <end position="528"/>
    </location>
</feature>
<feature type="strand" evidence="7">
    <location>
        <begin position="531"/>
        <end position="540"/>
    </location>
</feature>
<feature type="strand" evidence="7">
    <location>
        <begin position="543"/>
        <end position="550"/>
    </location>
</feature>
<feature type="helix" evidence="7">
    <location>
        <begin position="552"/>
        <end position="557"/>
    </location>
</feature>
<feature type="helix" evidence="7">
    <location>
        <begin position="568"/>
        <end position="573"/>
    </location>
</feature>
<feature type="helix" evidence="7">
    <location>
        <begin position="585"/>
        <end position="593"/>
    </location>
</feature>
<feature type="helix" evidence="7">
    <location>
        <begin position="598"/>
        <end position="602"/>
    </location>
</feature>
<sequence length="618" mass="68795">MSAYATQGFNLDDRGRRIVVDPVTRIEGHMRCEVNVDANNVIRNAVSTGTMWRGLEVILKGRDPRDAWAFVERICGVCTGCHALASVRAVENALDIRIPKNAHLIREIMAKTLQVHDHAVHFYHLHALDWVDVMSALKADPKRTSELQQLVSPAHPLSSAGYFRDIQNRLKRFVESGQLGPFMNGYWGSKAYVLPPEANLMAVTHYLEALDLQKEWVKIHTIFGGKNPHPNYLVGGVPCAINLDGIGAASAPVNMERLSFVKARIDEIIEFNKNVYVPDVLAIGTLYKQAGWLYGGGLAATNVLDYGEYPNVAYNKSTDQLPGGAILNGNWDEVFPVDPRDSQQVQEFVSHSWYKYADESVGLHPWDGVTEPNYVLGANTKGTRTRIEQIDESAKYSWIKSPRWRGHAMEVGPLSRYILAYAHARSGNKYAERPKEQLEYSAQMINSAIPKALGLPETQYTLKQLLPSTIGRTLARALESQYCGEMMHSDWHDLVANIRAGDTATANVDKWDPATWPLQAKGVGTVAAPRGALGHWIRIKDGRIENYQCVVPTTWNGSPRDYKGQIGAFEASLMNTPMVNPEQPVEILRTLHSFDPCLACSTHVMSAEGQELTTVKVR</sequence>
<dbReference type="EC" id="1.12.99.6"/>
<dbReference type="EMBL" id="M96433">
    <property type="protein sequence ID" value="AAA16462.1"/>
    <property type="molecule type" value="Unassigned_DNA"/>
</dbReference>
<dbReference type="EMBL" id="AY305378">
    <property type="protein sequence ID" value="AAP85758.1"/>
    <property type="molecule type" value="Genomic_DNA"/>
</dbReference>
<dbReference type="PIR" id="B43255">
    <property type="entry name" value="B43255"/>
</dbReference>
<dbReference type="RefSeq" id="WP_011153927.1">
    <property type="nucleotide sequence ID" value="NC_005241.1"/>
</dbReference>
<dbReference type="PDB" id="3RGW">
    <property type="method" value="X-ray"/>
    <property type="resolution" value="1.50 A"/>
    <property type="chains" value="L=1-603"/>
</dbReference>
<dbReference type="PDB" id="4IUB">
    <property type="method" value="X-ray"/>
    <property type="resolution" value="1.61 A"/>
    <property type="chains" value="L=1-603"/>
</dbReference>
<dbReference type="PDB" id="4IUC">
    <property type="method" value="X-ray"/>
    <property type="resolution" value="1.45 A"/>
    <property type="chains" value="L=1-603"/>
</dbReference>
<dbReference type="PDB" id="4IUD">
    <property type="method" value="X-ray"/>
    <property type="resolution" value="1.45 A"/>
    <property type="chains" value="L=1-603"/>
</dbReference>
<dbReference type="PDB" id="4TTT">
    <property type="method" value="X-ray"/>
    <property type="resolution" value="1.72 A"/>
    <property type="chains" value="L=1-603"/>
</dbReference>
<dbReference type="PDB" id="5D51">
    <property type="method" value="X-ray"/>
    <property type="resolution" value="1.47 A"/>
    <property type="chains" value="L=1-603"/>
</dbReference>
<dbReference type="PDB" id="5MDJ">
    <property type="method" value="X-ray"/>
    <property type="resolution" value="1.48 A"/>
    <property type="chains" value="L=1-603"/>
</dbReference>
<dbReference type="PDB" id="5MDK">
    <property type="method" value="X-ray"/>
    <property type="resolution" value="1.50 A"/>
    <property type="chains" value="L=1-603"/>
</dbReference>
<dbReference type="PDB" id="5MDL">
    <property type="method" value="X-ray"/>
    <property type="resolution" value="1.41 A"/>
    <property type="chains" value="L=1-603"/>
</dbReference>
<dbReference type="PDB" id="7ODG">
    <property type="method" value="X-ray"/>
    <property type="resolution" value="1.62 A"/>
    <property type="chains" value="L=1-603"/>
</dbReference>
<dbReference type="PDB" id="7ODH">
    <property type="method" value="X-ray"/>
    <property type="resolution" value="1.34 A"/>
    <property type="chains" value="L=1-603"/>
</dbReference>
<dbReference type="PDB" id="8POU">
    <property type="method" value="X-ray"/>
    <property type="resolution" value="1.65 A"/>
    <property type="chains" value="L=1-603"/>
</dbReference>
<dbReference type="PDB" id="8POV">
    <property type="method" value="X-ray"/>
    <property type="resolution" value="1.92 A"/>
    <property type="chains" value="L=1-603"/>
</dbReference>
<dbReference type="PDB" id="8POW">
    <property type="method" value="X-ray"/>
    <property type="resolution" value="1.61 A"/>
    <property type="chains" value="L=1-603"/>
</dbReference>
<dbReference type="PDB" id="8POX">
    <property type="method" value="X-ray"/>
    <property type="resolution" value="1.60 A"/>
    <property type="chains" value="L=1-603"/>
</dbReference>
<dbReference type="PDB" id="8POY">
    <property type="method" value="X-ray"/>
    <property type="resolution" value="1.93 A"/>
    <property type="chains" value="L=1-603"/>
</dbReference>
<dbReference type="PDB" id="8POZ">
    <property type="method" value="X-ray"/>
    <property type="resolution" value="1.65 A"/>
    <property type="chains" value="L=1-603"/>
</dbReference>
<dbReference type="PDBsum" id="3RGW"/>
<dbReference type="PDBsum" id="4IUB"/>
<dbReference type="PDBsum" id="4IUC"/>
<dbReference type="PDBsum" id="4IUD"/>
<dbReference type="PDBsum" id="4TTT"/>
<dbReference type="PDBsum" id="5D51"/>
<dbReference type="PDBsum" id="5MDJ"/>
<dbReference type="PDBsum" id="5MDK"/>
<dbReference type="PDBsum" id="5MDL"/>
<dbReference type="PDBsum" id="7ODG"/>
<dbReference type="PDBsum" id="7ODH"/>
<dbReference type="PDBsum" id="8POU"/>
<dbReference type="PDBsum" id="8POV"/>
<dbReference type="PDBsum" id="8POW"/>
<dbReference type="PDBsum" id="8POX"/>
<dbReference type="PDBsum" id="8POY"/>
<dbReference type="PDBsum" id="8POZ"/>
<dbReference type="SMR" id="P31891"/>
<dbReference type="DIP" id="DIP-59144N"/>
<dbReference type="IntAct" id="P31891">
    <property type="interactions" value="1"/>
</dbReference>
<dbReference type="KEGG" id="reh:PHG002"/>
<dbReference type="PATRIC" id="fig|381666.6.peg.2"/>
<dbReference type="eggNOG" id="COG0374">
    <property type="taxonomic scope" value="Bacteria"/>
</dbReference>
<dbReference type="HOGENOM" id="CLU_030087_0_0_4"/>
<dbReference type="OrthoDB" id="9761717at2"/>
<dbReference type="BioCyc" id="MetaCyc:HOXGALCA-MONOMER"/>
<dbReference type="BRENDA" id="1.12.99.6">
    <property type="organism ID" value="231"/>
</dbReference>
<dbReference type="EvolutionaryTrace" id="P31891"/>
<dbReference type="Proteomes" id="UP000008210">
    <property type="component" value="Plasmid megaplasmid pHG1"/>
</dbReference>
<dbReference type="GO" id="GO:0005886">
    <property type="term" value="C:plasma membrane"/>
    <property type="evidence" value="ECO:0007669"/>
    <property type="project" value="UniProtKB-SubCell"/>
</dbReference>
<dbReference type="GO" id="GO:0008901">
    <property type="term" value="F:ferredoxin hydrogenase activity"/>
    <property type="evidence" value="ECO:0007669"/>
    <property type="project" value="InterPro"/>
</dbReference>
<dbReference type="GO" id="GO:0033748">
    <property type="term" value="F:hydrogenase (acceptor) activity"/>
    <property type="evidence" value="ECO:0007669"/>
    <property type="project" value="UniProtKB-EC"/>
</dbReference>
<dbReference type="GO" id="GO:0016151">
    <property type="term" value="F:nickel cation binding"/>
    <property type="evidence" value="ECO:0007669"/>
    <property type="project" value="InterPro"/>
</dbReference>
<dbReference type="FunFam" id="1.10.645.10:FF:000002">
    <property type="entry name" value="Hydrogenase 2 large subunit"/>
    <property type="match status" value="1"/>
</dbReference>
<dbReference type="Gene3D" id="1.10.645.10">
    <property type="entry name" value="Cytochrome-c3 Hydrogenase, chain B"/>
    <property type="match status" value="1"/>
</dbReference>
<dbReference type="InterPro" id="IPR001501">
    <property type="entry name" value="Ni-dep_hyd_lsu"/>
</dbReference>
<dbReference type="InterPro" id="IPR018194">
    <property type="entry name" value="Ni-dep_hyd_lsu_Ni_BS"/>
</dbReference>
<dbReference type="InterPro" id="IPR029014">
    <property type="entry name" value="NiFe-Hase_large"/>
</dbReference>
<dbReference type="InterPro" id="IPR050867">
    <property type="entry name" value="NiFe/NiFeSe_hydrgnase_LSU"/>
</dbReference>
<dbReference type="PANTHER" id="PTHR42958">
    <property type="entry name" value="HYDROGENASE-2 LARGE CHAIN"/>
    <property type="match status" value="1"/>
</dbReference>
<dbReference type="PANTHER" id="PTHR42958:SF2">
    <property type="entry name" value="UPTAKE HYDROGENASE LARGE SUBUNIT"/>
    <property type="match status" value="1"/>
</dbReference>
<dbReference type="Pfam" id="PF00374">
    <property type="entry name" value="NiFeSe_Hases"/>
    <property type="match status" value="1"/>
</dbReference>
<dbReference type="SUPFAM" id="SSF56762">
    <property type="entry name" value="HydB/Nqo4-like"/>
    <property type="match status" value="1"/>
</dbReference>
<dbReference type="PROSITE" id="PS00507">
    <property type="entry name" value="NI_HGENASE_L_1"/>
    <property type="match status" value="1"/>
</dbReference>
<dbReference type="PROSITE" id="PS00508">
    <property type="entry name" value="NI_HGENASE_L_2"/>
    <property type="match status" value="1"/>
</dbReference>
<geneLocation type="plasmid">
    <name>megaplasmid pHG1</name>
</geneLocation>
<organism>
    <name type="scientific">Cupriavidus necator (strain ATCC 17699 / DSM 428 / KCTC 22496 / NCIMB 10442 / H16 / Stanier 337)</name>
    <name type="common">Ralstonia eutropha</name>
    <dbReference type="NCBI Taxonomy" id="381666"/>
    <lineage>
        <taxon>Bacteria</taxon>
        <taxon>Pseudomonadati</taxon>
        <taxon>Pseudomonadota</taxon>
        <taxon>Betaproteobacteria</taxon>
        <taxon>Burkholderiales</taxon>
        <taxon>Burkholderiaceae</taxon>
        <taxon>Cupriavidus</taxon>
    </lineage>
</organism>
<gene>
    <name type="primary">hoxG</name>
    <name type="ordered locus">PHG002</name>
</gene>
<keyword id="KW-0002">3D-structure</keyword>
<keyword id="KW-1003">Cell membrane</keyword>
<keyword id="KW-0903">Direct protein sequencing</keyword>
<keyword id="KW-0472">Membrane</keyword>
<keyword id="KW-0479">Metal-binding</keyword>
<keyword id="KW-0533">Nickel</keyword>
<keyword id="KW-0560">Oxidoreductase</keyword>
<keyword id="KW-0614">Plasmid</keyword>
<keyword id="KW-1185">Reference proteome</keyword>